<comment type="function">
    <text evidence="1">Catalyzes the conversion of heme O to heme A by two successive hydroxylations of the methyl group at C8. The first hydroxylation forms heme I, the second hydroxylation results in an unstable dihydroxymethyl group, which spontaneously dehydrates, resulting in the formyl group of heme A.</text>
</comment>
<comment type="catalytic activity">
    <reaction evidence="1">
        <text>Fe(II)-heme o + 2 A + H2O = Fe(II)-heme a + 2 AH2</text>
        <dbReference type="Rhea" id="RHEA:63388"/>
        <dbReference type="ChEBI" id="CHEBI:13193"/>
        <dbReference type="ChEBI" id="CHEBI:15377"/>
        <dbReference type="ChEBI" id="CHEBI:17499"/>
        <dbReference type="ChEBI" id="CHEBI:60530"/>
        <dbReference type="ChEBI" id="CHEBI:61715"/>
        <dbReference type="EC" id="1.17.99.9"/>
    </reaction>
    <physiologicalReaction direction="left-to-right" evidence="1">
        <dbReference type="Rhea" id="RHEA:63389"/>
    </physiologicalReaction>
</comment>
<comment type="cofactor">
    <cofactor evidence="1">
        <name>heme b</name>
        <dbReference type="ChEBI" id="CHEBI:60344"/>
    </cofactor>
</comment>
<comment type="pathway">
    <text evidence="1">Porphyrin-containing compound metabolism; heme A biosynthesis; heme A from heme O: step 1/1.</text>
</comment>
<comment type="subunit">
    <text evidence="1">Interacts with CtaB.</text>
</comment>
<comment type="subcellular location">
    <subcellularLocation>
        <location evidence="1">Cell membrane</location>
        <topology evidence="1">Multi-pass membrane protein</topology>
    </subcellularLocation>
</comment>
<comment type="similarity">
    <text evidence="1">Belongs to the COX15/CtaA family. Type 2 subfamily.</text>
</comment>
<name>CTAA_PARL1</name>
<accession>A7HXA1</accession>
<proteinExistence type="inferred from homology"/>
<organism>
    <name type="scientific">Parvibaculum lavamentivorans (strain DS-1 / DSM 13023 / NCIMB 13966)</name>
    <dbReference type="NCBI Taxonomy" id="402881"/>
    <lineage>
        <taxon>Bacteria</taxon>
        <taxon>Pseudomonadati</taxon>
        <taxon>Pseudomonadota</taxon>
        <taxon>Alphaproteobacteria</taxon>
        <taxon>Hyphomicrobiales</taxon>
        <taxon>Parvibaculaceae</taxon>
        <taxon>Parvibaculum</taxon>
    </lineage>
</organism>
<sequence length="344" mass="38529">MNILPRINAIEKTDANHHAIAWWLIGVAALVFIMVVVGGLTRLTESGLSITEWKPVTGALPPMTEEHWQEEFDLYRQIPQYQLVNKGMSLDEFKTIYWWEWSHRFLGRLIGLAFFVPFVFFVVTRRVERALVPRLIFLFVLGGMQGVLGWWMVMSGLTDRTEVSQYRLAAHLGLATLIFGALIWTALDLLNGKSTRLLTGLAKAAAAILALIFLQTILGAFVAGIRAGLIYNTWPLMAGAFIPDGLFAMTPVWHNFFESHLTVQFQHRMTAYLLLLCVVWHWWAARKTAAAPSAGWLAVATFAQACIGIWTVLWVVPIPLGAAHQAGAMVVFGVAVWHVHRLAK</sequence>
<feature type="chain" id="PRO_0000349058" description="Heme A synthase">
    <location>
        <begin position="1"/>
        <end position="344"/>
    </location>
</feature>
<feature type="transmembrane region" description="Helical" evidence="1">
    <location>
        <begin position="20"/>
        <end position="40"/>
    </location>
</feature>
<feature type="transmembrane region" description="Helical" evidence="1">
    <location>
        <begin position="104"/>
        <end position="124"/>
    </location>
</feature>
<feature type="transmembrane region" description="Helical" evidence="1">
    <location>
        <begin position="135"/>
        <end position="155"/>
    </location>
</feature>
<feature type="transmembrane region" description="Helical" evidence="1">
    <location>
        <begin position="170"/>
        <end position="190"/>
    </location>
</feature>
<feature type="transmembrane region" description="Helical" evidence="1">
    <location>
        <begin position="205"/>
        <end position="225"/>
    </location>
</feature>
<feature type="transmembrane region" description="Helical" evidence="1">
    <location>
        <begin position="233"/>
        <end position="253"/>
    </location>
</feature>
<feature type="transmembrane region" description="Helical" evidence="1">
    <location>
        <begin position="265"/>
        <end position="285"/>
    </location>
</feature>
<feature type="transmembrane region" description="Helical" evidence="1">
    <location>
        <begin position="296"/>
        <end position="316"/>
    </location>
</feature>
<feature type="transmembrane region" description="Helical" evidence="1">
    <location>
        <begin position="317"/>
        <end position="337"/>
    </location>
</feature>
<feature type="binding site" description="axial binding residue" evidence="1">
    <location>
        <position position="267"/>
    </location>
    <ligand>
        <name>heme</name>
        <dbReference type="ChEBI" id="CHEBI:30413"/>
    </ligand>
    <ligandPart>
        <name>Fe</name>
        <dbReference type="ChEBI" id="CHEBI:18248"/>
    </ligandPart>
</feature>
<feature type="binding site" description="axial binding residue" evidence="1">
    <location>
        <position position="324"/>
    </location>
    <ligand>
        <name>heme</name>
        <dbReference type="ChEBI" id="CHEBI:30413"/>
    </ligand>
    <ligandPart>
        <name>Fe</name>
        <dbReference type="ChEBI" id="CHEBI:18248"/>
    </ligandPart>
</feature>
<evidence type="ECO:0000255" key="1">
    <source>
        <dbReference type="HAMAP-Rule" id="MF_01665"/>
    </source>
</evidence>
<gene>
    <name evidence="1" type="primary">ctaA</name>
    <name type="ordered locus">Plav_2927</name>
</gene>
<dbReference type="EC" id="1.17.99.9" evidence="1"/>
<dbReference type="EMBL" id="CP000774">
    <property type="protein sequence ID" value="ABS64534.1"/>
    <property type="molecule type" value="Genomic_DNA"/>
</dbReference>
<dbReference type="RefSeq" id="WP_012111850.1">
    <property type="nucleotide sequence ID" value="NC_009719.1"/>
</dbReference>
<dbReference type="SMR" id="A7HXA1"/>
<dbReference type="STRING" id="402881.Plav_2927"/>
<dbReference type="KEGG" id="pla:Plav_2927"/>
<dbReference type="eggNOG" id="COG1612">
    <property type="taxonomic scope" value="Bacteria"/>
</dbReference>
<dbReference type="HOGENOM" id="CLU_017627_0_0_5"/>
<dbReference type="OrthoDB" id="9793156at2"/>
<dbReference type="UniPathway" id="UPA00269">
    <property type="reaction ID" value="UER00713"/>
</dbReference>
<dbReference type="Proteomes" id="UP000006377">
    <property type="component" value="Chromosome"/>
</dbReference>
<dbReference type="GO" id="GO:0005886">
    <property type="term" value="C:plasma membrane"/>
    <property type="evidence" value="ECO:0007669"/>
    <property type="project" value="UniProtKB-SubCell"/>
</dbReference>
<dbReference type="GO" id="GO:0046872">
    <property type="term" value="F:metal ion binding"/>
    <property type="evidence" value="ECO:0007669"/>
    <property type="project" value="UniProtKB-KW"/>
</dbReference>
<dbReference type="GO" id="GO:0016653">
    <property type="term" value="F:oxidoreductase activity, acting on NAD(P)H, heme protein as acceptor"/>
    <property type="evidence" value="ECO:0007669"/>
    <property type="project" value="InterPro"/>
</dbReference>
<dbReference type="GO" id="GO:0006784">
    <property type="term" value="P:heme A biosynthetic process"/>
    <property type="evidence" value="ECO:0007669"/>
    <property type="project" value="UniProtKB-UniRule"/>
</dbReference>
<dbReference type="HAMAP" id="MF_01665">
    <property type="entry name" value="HemeA_synth_type2"/>
    <property type="match status" value="1"/>
</dbReference>
<dbReference type="InterPro" id="IPR003780">
    <property type="entry name" value="COX15/CtaA_fam"/>
</dbReference>
<dbReference type="InterPro" id="IPR023754">
    <property type="entry name" value="HemeA_Synthase_type2"/>
</dbReference>
<dbReference type="PANTHER" id="PTHR23289">
    <property type="entry name" value="CYTOCHROME C OXIDASE ASSEMBLY PROTEIN COX15"/>
    <property type="match status" value="1"/>
</dbReference>
<dbReference type="PANTHER" id="PTHR23289:SF2">
    <property type="entry name" value="CYTOCHROME C OXIDASE ASSEMBLY PROTEIN COX15 HOMOLOG"/>
    <property type="match status" value="1"/>
</dbReference>
<dbReference type="Pfam" id="PF02628">
    <property type="entry name" value="COX15-CtaA"/>
    <property type="match status" value="1"/>
</dbReference>
<reference key="1">
    <citation type="journal article" date="2011" name="Stand. Genomic Sci.">
        <title>Complete genome sequence of Parvibaculum lavamentivorans type strain (DS-1(T)).</title>
        <authorList>
            <person name="Schleheck D."/>
            <person name="Weiss M."/>
            <person name="Pitluck S."/>
            <person name="Bruce D."/>
            <person name="Land M.L."/>
            <person name="Han S."/>
            <person name="Saunders E."/>
            <person name="Tapia R."/>
            <person name="Detter C."/>
            <person name="Brettin T."/>
            <person name="Han J."/>
            <person name="Woyke T."/>
            <person name="Goodwin L."/>
            <person name="Pennacchio L."/>
            <person name="Nolan M."/>
            <person name="Cook A.M."/>
            <person name="Kjelleberg S."/>
            <person name="Thomas T."/>
        </authorList>
    </citation>
    <scope>NUCLEOTIDE SEQUENCE [LARGE SCALE GENOMIC DNA]</scope>
    <source>
        <strain>DS-1 / DSM 13023 / NCIMB 13966</strain>
    </source>
</reference>
<keyword id="KW-1003">Cell membrane</keyword>
<keyword id="KW-0350">Heme biosynthesis</keyword>
<keyword id="KW-0408">Iron</keyword>
<keyword id="KW-0472">Membrane</keyword>
<keyword id="KW-0479">Metal-binding</keyword>
<keyword id="KW-0560">Oxidoreductase</keyword>
<keyword id="KW-1185">Reference proteome</keyword>
<keyword id="KW-0812">Transmembrane</keyword>
<keyword id="KW-1133">Transmembrane helix</keyword>
<protein>
    <recommendedName>
        <fullName evidence="1">Heme A synthase</fullName>
        <shortName evidence="1">HAS</shortName>
        <ecNumber evidence="1">1.17.99.9</ecNumber>
    </recommendedName>
    <alternativeName>
        <fullName evidence="1">Cytochrome aa3-controlling protein</fullName>
    </alternativeName>
</protein>